<feature type="chain" id="PRO_1000076488" description="Bifunctional purine biosynthesis protein PurH">
    <location>
        <begin position="1"/>
        <end position="526"/>
    </location>
</feature>
<feature type="domain" description="MGS-like" evidence="2">
    <location>
        <begin position="1"/>
        <end position="145"/>
    </location>
</feature>
<sequence>MIRTALLSVSDKNGIVPFAKSLHEQGIKLISTGGTAKLLAENNLPVVEVSSLTKFPEMLDGRVKTLHPMVHGGLLARRDFPEHMAALEEHGIDTIDMLVINLYPFNETVAKENCSFEDAVENIDIGGPAMLRAAAKNHQDVTVLISPEDYAPVLAEMKANQNVVSYKTNLALAKKVFAHTAQYDGSIANYLSALGDDLDHKARSAYPETLHLAFEKVQEMRYGENPHQSAAFYKDIYPVNGALANYKQLQGKELSYNNIADADSAWECVKSFAGNSGGAAACVIIKHANPCGVAVGASALEAYQKAFKTDPSSAFGGIIAFNIPCDGAAAQEISKQFVEVLIAPSFTDEAKAIFAAKQNVRLLEIPLGNAFNTFDFKRVGGGLLVQSPDAKNVLQNEMRVVSQRQPTPSEMNDMMFAWRVAKFVKSNAIVYCSNGMTLGIGAGQMSRVDSARMASIKAENAGLSLKGSAVASDAFFPFRDGLDVVVNGGASCAIQPGGSMRDDEIIAAANEHGIAMIFTGTRHFRH</sequence>
<keyword id="KW-0378">Hydrolase</keyword>
<keyword id="KW-0511">Multifunctional enzyme</keyword>
<keyword id="KW-0658">Purine biosynthesis</keyword>
<keyword id="KW-1185">Reference proteome</keyword>
<keyword id="KW-0808">Transferase</keyword>
<dbReference type="EC" id="2.1.2.3" evidence="1"/>
<dbReference type="EC" id="3.5.4.10" evidence="1"/>
<dbReference type="EMBL" id="CP000655">
    <property type="protein sequence ID" value="ABP35089.1"/>
    <property type="molecule type" value="Genomic_DNA"/>
</dbReference>
<dbReference type="RefSeq" id="WP_011903712.1">
    <property type="nucleotide sequence ID" value="NC_009379.1"/>
</dbReference>
<dbReference type="SMR" id="A4T025"/>
<dbReference type="GeneID" id="31482267"/>
<dbReference type="KEGG" id="pnu:Pnuc_1877"/>
<dbReference type="eggNOG" id="COG0138">
    <property type="taxonomic scope" value="Bacteria"/>
</dbReference>
<dbReference type="HOGENOM" id="CLU_016316_5_2_4"/>
<dbReference type="UniPathway" id="UPA00074">
    <property type="reaction ID" value="UER00133"/>
</dbReference>
<dbReference type="UniPathway" id="UPA00074">
    <property type="reaction ID" value="UER00135"/>
</dbReference>
<dbReference type="Proteomes" id="UP000000231">
    <property type="component" value="Chromosome"/>
</dbReference>
<dbReference type="GO" id="GO:0005829">
    <property type="term" value="C:cytosol"/>
    <property type="evidence" value="ECO:0007669"/>
    <property type="project" value="TreeGrafter"/>
</dbReference>
<dbReference type="GO" id="GO:0003937">
    <property type="term" value="F:IMP cyclohydrolase activity"/>
    <property type="evidence" value="ECO:0007669"/>
    <property type="project" value="UniProtKB-UniRule"/>
</dbReference>
<dbReference type="GO" id="GO:0004643">
    <property type="term" value="F:phosphoribosylaminoimidazolecarboxamide formyltransferase activity"/>
    <property type="evidence" value="ECO:0007669"/>
    <property type="project" value="UniProtKB-UniRule"/>
</dbReference>
<dbReference type="GO" id="GO:0006189">
    <property type="term" value="P:'de novo' IMP biosynthetic process"/>
    <property type="evidence" value="ECO:0007669"/>
    <property type="project" value="UniProtKB-UniRule"/>
</dbReference>
<dbReference type="CDD" id="cd01421">
    <property type="entry name" value="IMPCH"/>
    <property type="match status" value="1"/>
</dbReference>
<dbReference type="FunFam" id="3.40.140.20:FF:000001">
    <property type="entry name" value="Bifunctional purine biosynthesis protein PurH"/>
    <property type="match status" value="1"/>
</dbReference>
<dbReference type="FunFam" id="3.40.140.20:FF:000002">
    <property type="entry name" value="Bifunctional purine biosynthesis protein PurH"/>
    <property type="match status" value="1"/>
</dbReference>
<dbReference type="FunFam" id="3.40.50.1380:FF:000001">
    <property type="entry name" value="Bifunctional purine biosynthesis protein PurH"/>
    <property type="match status" value="1"/>
</dbReference>
<dbReference type="Gene3D" id="3.40.140.20">
    <property type="match status" value="2"/>
</dbReference>
<dbReference type="Gene3D" id="3.40.50.1380">
    <property type="entry name" value="Methylglyoxal synthase-like domain"/>
    <property type="match status" value="1"/>
</dbReference>
<dbReference type="HAMAP" id="MF_00139">
    <property type="entry name" value="PurH"/>
    <property type="match status" value="1"/>
</dbReference>
<dbReference type="InterPro" id="IPR024051">
    <property type="entry name" value="AICAR_Tfase_dup_dom_sf"/>
</dbReference>
<dbReference type="InterPro" id="IPR016193">
    <property type="entry name" value="Cytidine_deaminase-like"/>
</dbReference>
<dbReference type="InterPro" id="IPR011607">
    <property type="entry name" value="MGS-like_dom"/>
</dbReference>
<dbReference type="InterPro" id="IPR036914">
    <property type="entry name" value="MGS-like_dom_sf"/>
</dbReference>
<dbReference type="InterPro" id="IPR002695">
    <property type="entry name" value="PurH-like"/>
</dbReference>
<dbReference type="NCBIfam" id="NF002049">
    <property type="entry name" value="PRK00881.1"/>
    <property type="match status" value="1"/>
</dbReference>
<dbReference type="NCBIfam" id="TIGR00355">
    <property type="entry name" value="purH"/>
    <property type="match status" value="1"/>
</dbReference>
<dbReference type="PANTHER" id="PTHR11692:SF0">
    <property type="entry name" value="BIFUNCTIONAL PURINE BIOSYNTHESIS PROTEIN ATIC"/>
    <property type="match status" value="1"/>
</dbReference>
<dbReference type="PANTHER" id="PTHR11692">
    <property type="entry name" value="BIFUNCTIONAL PURINE BIOSYNTHESIS PROTEIN PURH"/>
    <property type="match status" value="1"/>
</dbReference>
<dbReference type="Pfam" id="PF01808">
    <property type="entry name" value="AICARFT_IMPCHas"/>
    <property type="match status" value="1"/>
</dbReference>
<dbReference type="Pfam" id="PF02142">
    <property type="entry name" value="MGS"/>
    <property type="match status" value="1"/>
</dbReference>
<dbReference type="PIRSF" id="PIRSF000414">
    <property type="entry name" value="AICARFT_IMPCHas"/>
    <property type="match status" value="1"/>
</dbReference>
<dbReference type="SMART" id="SM00798">
    <property type="entry name" value="AICARFT_IMPCHas"/>
    <property type="match status" value="1"/>
</dbReference>
<dbReference type="SMART" id="SM00851">
    <property type="entry name" value="MGS"/>
    <property type="match status" value="1"/>
</dbReference>
<dbReference type="SUPFAM" id="SSF53927">
    <property type="entry name" value="Cytidine deaminase-like"/>
    <property type="match status" value="1"/>
</dbReference>
<dbReference type="SUPFAM" id="SSF52335">
    <property type="entry name" value="Methylglyoxal synthase-like"/>
    <property type="match status" value="1"/>
</dbReference>
<dbReference type="PROSITE" id="PS51855">
    <property type="entry name" value="MGS"/>
    <property type="match status" value="1"/>
</dbReference>
<reference key="1">
    <citation type="journal article" date="2012" name="Stand. Genomic Sci.">
        <title>Complete genome sequence of Polynucleobacter necessarius subsp. asymbioticus type strain (QLW-P1DMWA-1(T)).</title>
        <authorList>
            <person name="Meincke L."/>
            <person name="Copeland A."/>
            <person name="Lapidus A."/>
            <person name="Lucas S."/>
            <person name="Berry K.W."/>
            <person name="Del Rio T.G."/>
            <person name="Hammon N."/>
            <person name="Dalin E."/>
            <person name="Tice H."/>
            <person name="Pitluck S."/>
            <person name="Richardson P."/>
            <person name="Bruce D."/>
            <person name="Goodwin L."/>
            <person name="Han C."/>
            <person name="Tapia R."/>
            <person name="Detter J.C."/>
            <person name="Schmutz J."/>
            <person name="Brettin T."/>
            <person name="Larimer F."/>
            <person name="Land M."/>
            <person name="Hauser L."/>
            <person name="Kyrpides N.C."/>
            <person name="Ivanova N."/>
            <person name="Goker M."/>
            <person name="Woyke T."/>
            <person name="Wu Q.L."/>
            <person name="Pockl M."/>
            <person name="Hahn M.W."/>
            <person name="Klenk H.P."/>
        </authorList>
    </citation>
    <scope>NUCLEOTIDE SEQUENCE [LARGE SCALE GENOMIC DNA]</scope>
    <source>
        <strain>DSM 18221 / CIP 109841 / QLW-P1DMWA-1</strain>
    </source>
</reference>
<proteinExistence type="inferred from homology"/>
<accession>A4T025</accession>
<name>PUR9_POLAQ</name>
<gene>
    <name evidence="1" type="primary">purH</name>
    <name type="ordered locus">Pnuc_1877</name>
</gene>
<organism>
    <name type="scientific">Polynucleobacter asymbioticus (strain DSM 18221 / CIP 109841 / QLW-P1DMWA-1)</name>
    <name type="common">Polynucleobacter necessarius subsp. asymbioticus</name>
    <dbReference type="NCBI Taxonomy" id="312153"/>
    <lineage>
        <taxon>Bacteria</taxon>
        <taxon>Pseudomonadati</taxon>
        <taxon>Pseudomonadota</taxon>
        <taxon>Betaproteobacteria</taxon>
        <taxon>Burkholderiales</taxon>
        <taxon>Burkholderiaceae</taxon>
        <taxon>Polynucleobacter</taxon>
    </lineage>
</organism>
<comment type="catalytic activity">
    <reaction evidence="1">
        <text>(6R)-10-formyltetrahydrofolate + 5-amino-1-(5-phospho-beta-D-ribosyl)imidazole-4-carboxamide = 5-formamido-1-(5-phospho-D-ribosyl)imidazole-4-carboxamide + (6S)-5,6,7,8-tetrahydrofolate</text>
        <dbReference type="Rhea" id="RHEA:22192"/>
        <dbReference type="ChEBI" id="CHEBI:57453"/>
        <dbReference type="ChEBI" id="CHEBI:58467"/>
        <dbReference type="ChEBI" id="CHEBI:58475"/>
        <dbReference type="ChEBI" id="CHEBI:195366"/>
        <dbReference type="EC" id="2.1.2.3"/>
    </reaction>
</comment>
<comment type="catalytic activity">
    <reaction evidence="1">
        <text>IMP + H2O = 5-formamido-1-(5-phospho-D-ribosyl)imidazole-4-carboxamide</text>
        <dbReference type="Rhea" id="RHEA:18445"/>
        <dbReference type="ChEBI" id="CHEBI:15377"/>
        <dbReference type="ChEBI" id="CHEBI:58053"/>
        <dbReference type="ChEBI" id="CHEBI:58467"/>
        <dbReference type="EC" id="3.5.4.10"/>
    </reaction>
</comment>
<comment type="pathway">
    <text evidence="1">Purine metabolism; IMP biosynthesis via de novo pathway; 5-formamido-1-(5-phospho-D-ribosyl)imidazole-4-carboxamide from 5-amino-1-(5-phospho-D-ribosyl)imidazole-4-carboxamide (10-formyl THF route): step 1/1.</text>
</comment>
<comment type="pathway">
    <text evidence="1">Purine metabolism; IMP biosynthesis via de novo pathway; IMP from 5-formamido-1-(5-phospho-D-ribosyl)imidazole-4-carboxamide: step 1/1.</text>
</comment>
<comment type="domain">
    <text evidence="1">The IMP cyclohydrolase activity resides in the N-terminal region.</text>
</comment>
<comment type="similarity">
    <text evidence="1">Belongs to the PurH family.</text>
</comment>
<protein>
    <recommendedName>
        <fullName evidence="1">Bifunctional purine biosynthesis protein PurH</fullName>
    </recommendedName>
    <domain>
        <recommendedName>
            <fullName evidence="1">Phosphoribosylaminoimidazolecarboxamide formyltransferase</fullName>
            <ecNumber evidence="1">2.1.2.3</ecNumber>
        </recommendedName>
        <alternativeName>
            <fullName evidence="1">AICAR transformylase</fullName>
        </alternativeName>
    </domain>
    <domain>
        <recommendedName>
            <fullName evidence="1">IMP cyclohydrolase</fullName>
            <ecNumber evidence="1">3.5.4.10</ecNumber>
        </recommendedName>
        <alternativeName>
            <fullName evidence="1">ATIC</fullName>
        </alternativeName>
        <alternativeName>
            <fullName evidence="1">IMP synthase</fullName>
        </alternativeName>
        <alternativeName>
            <fullName evidence="1">Inosinicase</fullName>
        </alternativeName>
    </domain>
</protein>
<evidence type="ECO:0000255" key="1">
    <source>
        <dbReference type="HAMAP-Rule" id="MF_00139"/>
    </source>
</evidence>
<evidence type="ECO:0000255" key="2">
    <source>
        <dbReference type="PROSITE-ProRule" id="PRU01202"/>
    </source>
</evidence>